<organismHost>
    <name type="scientific">Saccharolobus islandicus</name>
    <name type="common">Sulfolobus islandicus</name>
    <dbReference type="NCBI Taxonomy" id="43080"/>
</organismHost>
<name>Y064_SIFVH</name>
<feature type="chain" id="PRO_0000385437" description="Uncharacterized protein 64">
    <location>
        <begin position="1"/>
        <end position="108"/>
    </location>
</feature>
<keyword id="KW-1185">Reference proteome</keyword>
<gene>
    <name type="primary">SIFV0064</name>
</gene>
<accession>Q914G8</accession>
<proteinExistence type="predicted"/>
<reference key="1">
    <citation type="journal article" date="2000" name="Virology">
        <title>A novel lipothrixvirus, SIFV, of the extremely thermophilic crenarchaeon Sulfolobus.</title>
        <authorList>
            <person name="Arnold H.P."/>
            <person name="Zillig W."/>
            <person name="Ziese U."/>
            <person name="Holz I."/>
            <person name="Crosby M."/>
            <person name="Utterback T."/>
            <person name="Weidmann J.F."/>
            <person name="Umayam L.A."/>
            <person name="Teffera K."/>
            <person name="Kristjanson J.K."/>
            <person name="Klenk H.P."/>
            <person name="Nelson K.E."/>
            <person name="Fraser C.M."/>
        </authorList>
    </citation>
    <scope>NUCLEOTIDE SEQUENCE [GENOMIC DNA]</scope>
</reference>
<organism>
    <name type="scientific">Sulfolobus islandicus filamentous virus (isolate Iceland/Hveragerdi)</name>
    <name type="common">SIFV</name>
    <dbReference type="NCBI Taxonomy" id="654908"/>
    <lineage>
        <taxon>Viruses</taxon>
        <taxon>Adnaviria</taxon>
        <taxon>Zilligvirae</taxon>
        <taxon>Taleaviricota</taxon>
        <taxon>Tokiviricetes</taxon>
        <taxon>Ligamenvirales</taxon>
        <taxon>Lipothrixviridae</taxon>
        <taxon>Betalipothrixvirus</taxon>
        <taxon>Sulfolobus islandicus filamentous virus</taxon>
    </lineage>
</organism>
<protein>
    <recommendedName>
        <fullName>Uncharacterized protein 64</fullName>
    </recommendedName>
</protein>
<dbReference type="EMBL" id="AF440571">
    <property type="protein sequence ID" value="AAL27773.1"/>
    <property type="molecule type" value="Genomic_DNA"/>
</dbReference>
<dbReference type="RefSeq" id="NP_445727.1">
    <property type="nucleotide sequence ID" value="NC_003214.2"/>
</dbReference>
<dbReference type="SMR" id="Q914G8"/>
<dbReference type="GeneID" id="922318"/>
<dbReference type="KEGG" id="vg:922318"/>
<dbReference type="Proteomes" id="UP000007017">
    <property type="component" value="Segment"/>
</dbReference>
<sequence>MSYYPVKDRIEKIIDRHNSKFSEAEIHIIDALIKWLRGNHVDITLLYMFEQLIGFDPNRIPDEDKLAIMKLILTAHPDYLLKYDKPEDIARVFKSIPGFEDILKTIFT</sequence>